<sequence length="584" mass="66657">MDLLWMPLLLVAACVSAVHSSPEVNAGVSSIHITKPVHILEERSLLVLTPAGLTQMLNQTRFLMVLFHNPSSKQSRNLAEELGKAVEIMGKGKNGIGFGKVDITIEKELQQEFGITKAPELKLFFEGNRSEPISCKGVVESAALVVWLRRQISQKAFLFNSSEQVAEFVISRPLVIVGFFQDLEEEVAELFYDVIKDFPELTFGVITIGNVIGRFHVTLDSVLVFKKGKIVNRQKLINDSTNKQELNRVIKQHLTDFVIEYNTENKDLISELHIMSHMLLFVSKSSESYGIIIQHYKLASKEFQNKILFILVDADEPRNGRVFKYFRVTEVDIPSVQILNLSSDARYKMPSDDITYESLKKFGRSFLSKNATKHQSSEEIPKYWDQGLVKQLVGKNFNVVVFDKEKDVFVMFYAPWSKKCKMLFPLLEELGRKYQNHSTIIIAKIDVTANDIQLMYLDRYPFFRLFPSGSQQAVLYKGEHTLKGFSDFLESHIKTKIEDEDELLSVEQNEVIEEEVLAEEKEVPMMRKGLPEQQSPELENMTKYVSKLEEPAGKKKTSEEVVVVVAKPKGPPVQKKKPKVKEEL</sequence>
<proteinExistence type="evidence at protein level"/>
<dbReference type="EMBL" id="AK097476">
    <property type="protein sequence ID" value="BAC05068.1"/>
    <property type="molecule type" value="mRNA"/>
</dbReference>
<dbReference type="EMBL" id="CH471186">
    <property type="protein sequence ID" value="EAW50316.1"/>
    <property type="molecule type" value="Genomic_DNA"/>
</dbReference>
<dbReference type="EMBL" id="BC042607">
    <property type="protein sequence ID" value="AAH42607.1"/>
    <property type="molecule type" value="mRNA"/>
</dbReference>
<dbReference type="EMBL" id="BC044936">
    <property type="protein sequence ID" value="AAH44936.1"/>
    <property type="molecule type" value="mRNA"/>
</dbReference>
<dbReference type="CCDS" id="CCDS10584.1"/>
<dbReference type="RefSeq" id="NP_777584.1">
    <property type="nucleotide sequence ID" value="NM_174924.2"/>
</dbReference>
<dbReference type="PDB" id="4NWY">
    <property type="method" value="X-ray"/>
    <property type="resolution" value="2.00 A"/>
    <property type="chains" value="A/B/C/D=258-386"/>
</dbReference>
<dbReference type="PDB" id="5XF7">
    <property type="method" value="X-ray"/>
    <property type="resolution" value="2.38 A"/>
    <property type="chains" value="A=21-584"/>
</dbReference>
<dbReference type="PDBsum" id="4NWY"/>
<dbReference type="PDBsum" id="5XF7"/>
<dbReference type="SMR" id="Q8N807"/>
<dbReference type="BioGRID" id="128486">
    <property type="interactions" value="4"/>
</dbReference>
<dbReference type="FunCoup" id="Q8N807">
    <property type="interactions" value="3"/>
</dbReference>
<dbReference type="IntAct" id="Q8N807">
    <property type="interactions" value="3"/>
</dbReference>
<dbReference type="STRING" id="9606.ENSP00000305465"/>
<dbReference type="GlyCosmos" id="Q8N807">
    <property type="glycosylation" value="5 sites, No reported glycans"/>
</dbReference>
<dbReference type="GlyGen" id="Q8N807">
    <property type="glycosylation" value="5 sites"/>
</dbReference>
<dbReference type="iPTMnet" id="Q8N807"/>
<dbReference type="PhosphoSitePlus" id="Q8N807"/>
<dbReference type="BioMuta" id="PDILT"/>
<dbReference type="DMDM" id="172045780"/>
<dbReference type="jPOST" id="Q8N807"/>
<dbReference type="MassIVE" id="Q8N807"/>
<dbReference type="PaxDb" id="9606-ENSP00000305465"/>
<dbReference type="PeptideAtlas" id="Q8N807"/>
<dbReference type="ProteomicsDB" id="72354"/>
<dbReference type="Antibodypedia" id="52595">
    <property type="antibodies" value="83 antibodies from 18 providers"/>
</dbReference>
<dbReference type="DNASU" id="204474"/>
<dbReference type="Ensembl" id="ENST00000302451.9">
    <property type="protein sequence ID" value="ENSP00000305465.4"/>
    <property type="gene ID" value="ENSG00000169340.10"/>
</dbReference>
<dbReference type="GeneID" id="204474"/>
<dbReference type="KEGG" id="hsa:204474"/>
<dbReference type="MANE-Select" id="ENST00000302451.9">
    <property type="protein sequence ID" value="ENSP00000305465.4"/>
    <property type="RefSeq nucleotide sequence ID" value="NM_174924.2"/>
    <property type="RefSeq protein sequence ID" value="NP_777584.1"/>
</dbReference>
<dbReference type="UCSC" id="uc002dhc.2">
    <property type="organism name" value="human"/>
</dbReference>
<dbReference type="AGR" id="HGNC:27338"/>
<dbReference type="CTD" id="204474"/>
<dbReference type="DisGeNET" id="204474"/>
<dbReference type="GeneCards" id="PDILT"/>
<dbReference type="HGNC" id="HGNC:27338">
    <property type="gene designation" value="PDILT"/>
</dbReference>
<dbReference type="HPA" id="ENSG00000169340">
    <property type="expression patterns" value="Tissue enriched (stomach)"/>
</dbReference>
<dbReference type="MIM" id="618588">
    <property type="type" value="gene"/>
</dbReference>
<dbReference type="neXtProt" id="NX_Q8N807"/>
<dbReference type="OpenTargets" id="ENSG00000169340"/>
<dbReference type="PharmGKB" id="PA164724442"/>
<dbReference type="VEuPathDB" id="HostDB:ENSG00000169340"/>
<dbReference type="eggNOG" id="KOG0191">
    <property type="taxonomic scope" value="Eukaryota"/>
</dbReference>
<dbReference type="GeneTree" id="ENSGT00940000160939"/>
<dbReference type="HOGENOM" id="CLU_025879_1_1_1"/>
<dbReference type="InParanoid" id="Q8N807"/>
<dbReference type="OMA" id="APWSKKC"/>
<dbReference type="OrthoDB" id="72053at2759"/>
<dbReference type="PAN-GO" id="Q8N807">
    <property type="GO annotations" value="2 GO annotations based on evolutionary models"/>
</dbReference>
<dbReference type="PhylomeDB" id="Q8N807"/>
<dbReference type="TreeFam" id="TF106381"/>
<dbReference type="PathwayCommons" id="Q8N807"/>
<dbReference type="SignaLink" id="Q8N807"/>
<dbReference type="BioGRID-ORCS" id="204474">
    <property type="hits" value="8 hits in 1141 CRISPR screens"/>
</dbReference>
<dbReference type="ChiTaRS" id="PDILT">
    <property type="organism name" value="human"/>
</dbReference>
<dbReference type="EvolutionaryTrace" id="Q8N807"/>
<dbReference type="GenomeRNAi" id="204474"/>
<dbReference type="Pharos" id="Q8N807">
    <property type="development level" value="Tbio"/>
</dbReference>
<dbReference type="PRO" id="PR:Q8N807"/>
<dbReference type="Proteomes" id="UP000005640">
    <property type="component" value="Chromosome 16"/>
</dbReference>
<dbReference type="RNAct" id="Q8N807">
    <property type="molecule type" value="protein"/>
</dbReference>
<dbReference type="Bgee" id="ENSG00000169340">
    <property type="expression patterns" value="Expressed in left testis and 33 other cell types or tissues"/>
</dbReference>
<dbReference type="ExpressionAtlas" id="Q8N807">
    <property type="expression patterns" value="baseline and differential"/>
</dbReference>
<dbReference type="GO" id="GO:0005783">
    <property type="term" value="C:endoplasmic reticulum"/>
    <property type="evidence" value="ECO:0000318"/>
    <property type="project" value="GO_Central"/>
</dbReference>
<dbReference type="GO" id="GO:0003756">
    <property type="term" value="F:protein disulfide isomerase activity"/>
    <property type="evidence" value="ECO:0007669"/>
    <property type="project" value="Ensembl"/>
</dbReference>
<dbReference type="GO" id="GO:0044183">
    <property type="term" value="F:protein folding chaperone"/>
    <property type="evidence" value="ECO:0000269"/>
    <property type="project" value="DisProt"/>
</dbReference>
<dbReference type="GO" id="GO:0008354">
    <property type="term" value="P:germ cell migration"/>
    <property type="evidence" value="ECO:0007669"/>
    <property type="project" value="Ensembl"/>
</dbReference>
<dbReference type="GO" id="GO:0006457">
    <property type="term" value="P:protein folding"/>
    <property type="evidence" value="ECO:0000318"/>
    <property type="project" value="GO_Central"/>
</dbReference>
<dbReference type="GO" id="GO:0007286">
    <property type="term" value="P:spermatid development"/>
    <property type="evidence" value="ECO:0007669"/>
    <property type="project" value="Ensembl"/>
</dbReference>
<dbReference type="CDD" id="cd02961">
    <property type="entry name" value="PDI_a_family"/>
    <property type="match status" value="1"/>
</dbReference>
<dbReference type="CDD" id="cd02995">
    <property type="entry name" value="PDI_a_PDI_a'_C"/>
    <property type="match status" value="1"/>
</dbReference>
<dbReference type="CDD" id="cd02982">
    <property type="entry name" value="PDI_b'_family"/>
    <property type="match status" value="1"/>
</dbReference>
<dbReference type="CDD" id="cd02981">
    <property type="entry name" value="PDI_b_family"/>
    <property type="match status" value="1"/>
</dbReference>
<dbReference type="DisProt" id="DP02658"/>
<dbReference type="FunFam" id="3.40.30.10:FF:000167">
    <property type="entry name" value="Protein disulfide isomerase like, testis expressed"/>
    <property type="match status" value="1"/>
</dbReference>
<dbReference type="FunFam" id="3.40.30.10:FF:000177">
    <property type="entry name" value="Protein disulfide isomerase like, testis expressed"/>
    <property type="match status" value="1"/>
</dbReference>
<dbReference type="FunFam" id="3.40.30.10:FF:000191">
    <property type="entry name" value="Protein disulfide isomerase like, testis expressed"/>
    <property type="match status" value="1"/>
</dbReference>
<dbReference type="FunFam" id="3.40.30.10:FF:000209">
    <property type="entry name" value="Protein disulfide isomerase like, testis expressed"/>
    <property type="match status" value="1"/>
</dbReference>
<dbReference type="Gene3D" id="3.40.30.10">
    <property type="entry name" value="Glutaredoxin"/>
    <property type="match status" value="4"/>
</dbReference>
<dbReference type="InterPro" id="IPR036249">
    <property type="entry name" value="Thioredoxin-like_sf"/>
</dbReference>
<dbReference type="InterPro" id="IPR013766">
    <property type="entry name" value="Thioredoxin_domain"/>
</dbReference>
<dbReference type="PANTHER" id="PTHR18929">
    <property type="entry name" value="PROTEIN DISULFIDE ISOMERASE"/>
    <property type="match status" value="1"/>
</dbReference>
<dbReference type="PANTHER" id="PTHR18929:SF58">
    <property type="entry name" value="PROTEIN DISULFIDE-ISOMERASE-LIKE PROTEIN OF THE TESTIS"/>
    <property type="match status" value="1"/>
</dbReference>
<dbReference type="Pfam" id="PF00085">
    <property type="entry name" value="Thioredoxin"/>
    <property type="match status" value="2"/>
</dbReference>
<dbReference type="Pfam" id="PF13848">
    <property type="entry name" value="Thioredoxin_6"/>
    <property type="match status" value="1"/>
</dbReference>
<dbReference type="SUPFAM" id="SSF52833">
    <property type="entry name" value="Thioredoxin-like"/>
    <property type="match status" value="4"/>
</dbReference>
<dbReference type="PROSITE" id="PS00014">
    <property type="entry name" value="ER_TARGET"/>
    <property type="match status" value="1"/>
</dbReference>
<dbReference type="PROSITE" id="PS51352">
    <property type="entry name" value="THIOREDOXIN_2"/>
    <property type="match status" value="1"/>
</dbReference>
<keyword id="KW-0002">3D-structure</keyword>
<keyword id="KW-0143">Chaperone</keyword>
<keyword id="KW-0217">Developmental protein</keyword>
<keyword id="KW-0221">Differentiation</keyword>
<keyword id="KW-1015">Disulfide bond</keyword>
<keyword id="KW-0256">Endoplasmic reticulum</keyword>
<keyword id="KW-0325">Glycoprotein</keyword>
<keyword id="KW-0413">Isomerase</keyword>
<keyword id="KW-1267">Proteomics identification</keyword>
<keyword id="KW-1185">Reference proteome</keyword>
<keyword id="KW-0732">Signal</keyword>
<keyword id="KW-0744">Spermatogenesis</keyword>
<evidence type="ECO:0000255" key="1"/>
<evidence type="ECO:0000255" key="2">
    <source>
        <dbReference type="PROSITE-ProRule" id="PRU00691"/>
    </source>
</evidence>
<evidence type="ECO:0000255" key="3">
    <source>
        <dbReference type="PROSITE-ProRule" id="PRU10138"/>
    </source>
</evidence>
<evidence type="ECO:0000269" key="4">
    <source>
    </source>
</evidence>
<evidence type="ECO:0000269" key="5">
    <source>
    </source>
</evidence>
<evidence type="ECO:0000269" key="6">
    <source>
    </source>
</evidence>
<evidence type="ECO:0000269" key="7">
    <source>
    </source>
</evidence>
<evidence type="ECO:0000305" key="8"/>
<evidence type="ECO:0007829" key="9">
    <source>
        <dbReference type="PDB" id="4NWY"/>
    </source>
</evidence>
<evidence type="ECO:0007829" key="10">
    <source>
        <dbReference type="PDB" id="5XF7"/>
    </source>
</evidence>
<reference key="1">
    <citation type="journal article" date="2004" name="Nat. Genet.">
        <title>Complete sequencing and characterization of 21,243 full-length human cDNAs.</title>
        <authorList>
            <person name="Ota T."/>
            <person name="Suzuki Y."/>
            <person name="Nishikawa T."/>
            <person name="Otsuki T."/>
            <person name="Sugiyama T."/>
            <person name="Irie R."/>
            <person name="Wakamatsu A."/>
            <person name="Hayashi K."/>
            <person name="Sato H."/>
            <person name="Nagai K."/>
            <person name="Kimura K."/>
            <person name="Makita H."/>
            <person name="Sekine M."/>
            <person name="Obayashi M."/>
            <person name="Nishi T."/>
            <person name="Shibahara T."/>
            <person name="Tanaka T."/>
            <person name="Ishii S."/>
            <person name="Yamamoto J."/>
            <person name="Saito K."/>
            <person name="Kawai Y."/>
            <person name="Isono Y."/>
            <person name="Nakamura Y."/>
            <person name="Nagahari K."/>
            <person name="Murakami K."/>
            <person name="Yasuda T."/>
            <person name="Iwayanagi T."/>
            <person name="Wagatsuma M."/>
            <person name="Shiratori A."/>
            <person name="Sudo H."/>
            <person name="Hosoiri T."/>
            <person name="Kaku Y."/>
            <person name="Kodaira H."/>
            <person name="Kondo H."/>
            <person name="Sugawara M."/>
            <person name="Takahashi M."/>
            <person name="Kanda K."/>
            <person name="Yokoi T."/>
            <person name="Furuya T."/>
            <person name="Kikkawa E."/>
            <person name="Omura Y."/>
            <person name="Abe K."/>
            <person name="Kamihara K."/>
            <person name="Katsuta N."/>
            <person name="Sato K."/>
            <person name="Tanikawa M."/>
            <person name="Yamazaki M."/>
            <person name="Ninomiya K."/>
            <person name="Ishibashi T."/>
            <person name="Yamashita H."/>
            <person name="Murakawa K."/>
            <person name="Fujimori K."/>
            <person name="Tanai H."/>
            <person name="Kimata M."/>
            <person name="Watanabe M."/>
            <person name="Hiraoka S."/>
            <person name="Chiba Y."/>
            <person name="Ishida S."/>
            <person name="Ono Y."/>
            <person name="Takiguchi S."/>
            <person name="Watanabe S."/>
            <person name="Yosida M."/>
            <person name="Hotuta T."/>
            <person name="Kusano J."/>
            <person name="Kanehori K."/>
            <person name="Takahashi-Fujii A."/>
            <person name="Hara H."/>
            <person name="Tanase T.-O."/>
            <person name="Nomura Y."/>
            <person name="Togiya S."/>
            <person name="Komai F."/>
            <person name="Hara R."/>
            <person name="Takeuchi K."/>
            <person name="Arita M."/>
            <person name="Imose N."/>
            <person name="Musashino K."/>
            <person name="Yuuki H."/>
            <person name="Oshima A."/>
            <person name="Sasaki N."/>
            <person name="Aotsuka S."/>
            <person name="Yoshikawa Y."/>
            <person name="Matsunawa H."/>
            <person name="Ichihara T."/>
            <person name="Shiohata N."/>
            <person name="Sano S."/>
            <person name="Moriya S."/>
            <person name="Momiyama H."/>
            <person name="Satoh N."/>
            <person name="Takami S."/>
            <person name="Terashima Y."/>
            <person name="Suzuki O."/>
            <person name="Nakagawa S."/>
            <person name="Senoh A."/>
            <person name="Mizoguchi H."/>
            <person name="Goto Y."/>
            <person name="Shimizu F."/>
            <person name="Wakebe H."/>
            <person name="Hishigaki H."/>
            <person name="Watanabe T."/>
            <person name="Sugiyama A."/>
            <person name="Takemoto M."/>
            <person name="Kawakami B."/>
            <person name="Yamazaki M."/>
            <person name="Watanabe K."/>
            <person name="Kumagai A."/>
            <person name="Itakura S."/>
            <person name="Fukuzumi Y."/>
            <person name="Fujimori Y."/>
            <person name="Komiyama M."/>
            <person name="Tashiro H."/>
            <person name="Tanigami A."/>
            <person name="Fujiwara T."/>
            <person name="Ono T."/>
            <person name="Yamada K."/>
            <person name="Fujii Y."/>
            <person name="Ozaki K."/>
            <person name="Hirao M."/>
            <person name="Ohmori Y."/>
            <person name="Kawabata A."/>
            <person name="Hikiji T."/>
            <person name="Kobatake N."/>
            <person name="Inagaki H."/>
            <person name="Ikema Y."/>
            <person name="Okamoto S."/>
            <person name="Okitani R."/>
            <person name="Kawakami T."/>
            <person name="Noguchi S."/>
            <person name="Itoh T."/>
            <person name="Shigeta K."/>
            <person name="Senba T."/>
            <person name="Matsumura K."/>
            <person name="Nakajima Y."/>
            <person name="Mizuno T."/>
            <person name="Morinaga M."/>
            <person name="Sasaki M."/>
            <person name="Togashi T."/>
            <person name="Oyama M."/>
            <person name="Hata H."/>
            <person name="Watanabe M."/>
            <person name="Komatsu T."/>
            <person name="Mizushima-Sugano J."/>
            <person name="Satoh T."/>
            <person name="Shirai Y."/>
            <person name="Takahashi Y."/>
            <person name="Nakagawa K."/>
            <person name="Okumura K."/>
            <person name="Nagase T."/>
            <person name="Nomura N."/>
            <person name="Kikuchi H."/>
            <person name="Masuho Y."/>
            <person name="Yamashita R."/>
            <person name="Nakai K."/>
            <person name="Yada T."/>
            <person name="Nakamura Y."/>
            <person name="Ohara O."/>
            <person name="Isogai T."/>
            <person name="Sugano S."/>
        </authorList>
    </citation>
    <scope>NUCLEOTIDE SEQUENCE [LARGE SCALE MRNA]</scope>
    <scope>VARIANTS LYS-527 AND GLU-529</scope>
    <source>
        <tissue>Testis</tissue>
    </source>
</reference>
<reference key="2">
    <citation type="submission" date="2005-07" db="EMBL/GenBank/DDBJ databases">
        <authorList>
            <person name="Mural R.J."/>
            <person name="Istrail S."/>
            <person name="Sutton G.G."/>
            <person name="Florea L."/>
            <person name="Halpern A.L."/>
            <person name="Mobarry C.M."/>
            <person name="Lippert R."/>
            <person name="Walenz B."/>
            <person name="Shatkay H."/>
            <person name="Dew I."/>
            <person name="Miller J.R."/>
            <person name="Flanigan M.J."/>
            <person name="Edwards N.J."/>
            <person name="Bolanos R."/>
            <person name="Fasulo D."/>
            <person name="Halldorsson B.V."/>
            <person name="Hannenhalli S."/>
            <person name="Turner R."/>
            <person name="Yooseph S."/>
            <person name="Lu F."/>
            <person name="Nusskern D.R."/>
            <person name="Shue B.C."/>
            <person name="Zheng X.H."/>
            <person name="Zhong F."/>
            <person name="Delcher A.L."/>
            <person name="Huson D.H."/>
            <person name="Kravitz S.A."/>
            <person name="Mouchard L."/>
            <person name="Reinert K."/>
            <person name="Remington K.A."/>
            <person name="Clark A.G."/>
            <person name="Waterman M.S."/>
            <person name="Eichler E.E."/>
            <person name="Adams M.D."/>
            <person name="Hunkapiller M.W."/>
            <person name="Myers E.W."/>
            <person name="Venter J.C."/>
        </authorList>
    </citation>
    <scope>NUCLEOTIDE SEQUENCE [LARGE SCALE GENOMIC DNA]</scope>
</reference>
<reference key="3">
    <citation type="journal article" date="2004" name="Genome Res.">
        <title>The status, quality, and expansion of the NIH full-length cDNA project: the Mammalian Gene Collection (MGC).</title>
        <authorList>
            <consortium name="The MGC Project Team"/>
        </authorList>
    </citation>
    <scope>NUCLEOTIDE SEQUENCE [LARGE SCALE MRNA]</scope>
    <source>
        <tissue>Brain</tissue>
    </source>
</reference>
<reference key="4">
    <citation type="journal article" date="2005" name="J. Biol. Chem.">
        <title>PDILT, a divergent testis-specific protein disulfide isomerase with a non-classical SXXC motif that engages in disulfide-dependent interactions in the endoplasmic reticulum.</title>
        <authorList>
            <person name="van Lith M."/>
            <person name="Hartigan N."/>
            <person name="Hatch J."/>
            <person name="Benham A.M."/>
        </authorList>
    </citation>
    <scope>SUBCELLULAR LOCATION</scope>
    <scope>GLYCOSYLATION</scope>
    <scope>TISSUE SPECIFICITY</scope>
    <scope>INTERACTION WITH ERO1A</scope>
</reference>
<reference key="5">
    <citation type="journal article" date="2007" name="Mol. Biol. Cell">
        <title>A developmentally regulated chaperone complex for the endoplasmic reticulum of male haploid germ cells.</title>
        <authorList>
            <person name="van Lith M."/>
            <person name="Karala A.R."/>
            <person name="Bown D."/>
            <person name="Gatehouse J.A."/>
            <person name="Ruddock L.W."/>
            <person name="Saunders P.T.K."/>
            <person name="Benham A.M."/>
        </authorList>
    </citation>
    <scope>FUNCTION</scope>
    <scope>TISSUE SPECIFICITY</scope>
    <scope>INDUCTION</scope>
    <scope>SUBUNIT</scope>
    <scope>INTERACTION WITH CLGN</scope>
    <scope>MUTAGENESIS OF CYS-135 AND CYS-420</scope>
</reference>
<reference key="6">
    <citation type="journal article" date="2014" name="Sci. Rep.">
        <title>Structure of the substrate-binding b' domain of the protein disulfide isomerase-like protein of the testis.</title>
        <authorList>
            <person name="Bastos-Aristizabal S."/>
            <person name="Kozlov G."/>
            <person name="Gehring K."/>
        </authorList>
    </citation>
    <scope>X-RAY CRYSTALLOGRAPHY (2.00 ANGSTROMS) OF 258-386</scope>
</reference>
<reference key="7">
    <citation type="journal article" date="2006" name="Science">
        <title>The consensus coding sequences of human breast and colorectal cancers.</title>
        <authorList>
            <person name="Sjoeblom T."/>
            <person name="Jones S."/>
            <person name="Wood L.D."/>
            <person name="Parsons D.W."/>
            <person name="Lin J."/>
            <person name="Barber T.D."/>
            <person name="Mandelker D."/>
            <person name="Leary R.J."/>
            <person name="Ptak J."/>
            <person name="Silliman N."/>
            <person name="Szabo S."/>
            <person name="Buckhaults P."/>
            <person name="Farrell C."/>
            <person name="Meeh P."/>
            <person name="Markowitz S.D."/>
            <person name="Willis J."/>
            <person name="Dawson D."/>
            <person name="Willson J.K.V."/>
            <person name="Gazdar A.F."/>
            <person name="Hartigan J."/>
            <person name="Wu L."/>
            <person name="Liu C."/>
            <person name="Parmigiani G."/>
            <person name="Park B.H."/>
            <person name="Bachman K.E."/>
            <person name="Papadopoulos N."/>
            <person name="Vogelstein B."/>
            <person name="Kinzler K.W."/>
            <person name="Velculescu V.E."/>
        </authorList>
    </citation>
    <scope>VARIANT [LARGE SCALE ANALYSIS] GLN-106</scope>
</reference>
<accession>Q8N807</accession>
<accession>Q8IVQ5</accession>
<gene>
    <name type="primary">PDILT</name>
</gene>
<feature type="signal peptide" evidence="1">
    <location>
        <begin position="1"/>
        <end position="20"/>
    </location>
</feature>
<feature type="chain" id="PRO_0000325849" description="Protein disulfide-isomerase-like protein of the testis">
    <location>
        <begin position="21"/>
        <end position="584"/>
    </location>
</feature>
<feature type="domain" description="Thioredoxin" evidence="2">
    <location>
        <begin position="388"/>
        <end position="451"/>
    </location>
</feature>
<feature type="short sequence motif" description="Prevents secretion from ER" evidence="3">
    <location>
        <begin position="581"/>
        <end position="584"/>
    </location>
</feature>
<feature type="glycosylation site" description="N-linked (GlcNAc...) asparagine" evidence="1">
    <location>
        <position position="58"/>
    </location>
</feature>
<feature type="glycosylation site" description="N-linked (GlcNAc...) asparagine" evidence="1">
    <location>
        <position position="128"/>
    </location>
</feature>
<feature type="glycosylation site" description="N-linked (GlcNAc...) asparagine" evidence="1">
    <location>
        <position position="160"/>
    </location>
</feature>
<feature type="glycosylation site" description="N-linked (GlcNAc...) asparagine" evidence="1">
    <location>
        <position position="340"/>
    </location>
</feature>
<feature type="glycosylation site" description="N-linked (GlcNAc...) asparagine" evidence="1">
    <location>
        <position position="540"/>
    </location>
</feature>
<feature type="sequence variant" id="VAR_039937" description="In dbSNP:rs9926580.">
    <original>A</original>
    <variation>T</variation>
    <location>
        <position position="26"/>
    </location>
</feature>
<feature type="sequence variant" id="VAR_039938" description="In a colorectal cancer sample; somatic mutation; dbSNP:rs773495613." evidence="6">
    <original>E</original>
    <variation>Q</variation>
    <location>
        <position position="106"/>
    </location>
</feature>
<feature type="sequence variant" id="VAR_039939" description="In dbSNP:rs11648131.">
    <original>D</original>
    <variation>N</variation>
    <location>
        <position position="446"/>
    </location>
</feature>
<feature type="sequence variant" id="VAR_039940" description="In dbSNP:rs11865916.">
    <original>V</original>
    <variation>I</variation>
    <location>
        <position position="447"/>
    </location>
</feature>
<feature type="sequence variant" id="VAR_039941" description="In dbSNP:rs4500734.">
    <original>L</original>
    <variation>R</variation>
    <location>
        <position position="475"/>
    </location>
</feature>
<feature type="sequence variant" id="VAR_039942" description="In dbSNP:rs9652589." evidence="4">
    <original>R</original>
    <variation>K</variation>
    <location>
        <position position="527"/>
    </location>
</feature>
<feature type="sequence variant" id="VAR_039943" description="In dbSNP:rs9652588." evidence="4">
    <original>G</original>
    <variation>E</variation>
    <location>
        <position position="529"/>
    </location>
</feature>
<feature type="mutagenesis site" description="Does not affect homodimerization; when associated with A-420." evidence="7">
    <original>C</original>
    <variation>A</variation>
    <location>
        <position position="135"/>
    </location>
</feature>
<feature type="mutagenesis site" description="Does not affect homodimerization; when associated with A-135." evidence="7">
    <original>C</original>
    <variation>A</variation>
    <location>
        <position position="420"/>
    </location>
</feature>
<feature type="sequence conflict" description="In Ref. 1; BAC05068." evidence="8" ref="1">
    <original>V</original>
    <variation>E</variation>
    <location>
        <position position="561"/>
    </location>
</feature>
<feature type="strand" evidence="10">
    <location>
        <begin position="45"/>
        <end position="47"/>
    </location>
</feature>
<feature type="helix" evidence="10">
    <location>
        <begin position="50"/>
        <end position="59"/>
    </location>
</feature>
<feature type="strand" evidence="10">
    <location>
        <begin position="61"/>
        <end position="68"/>
    </location>
</feature>
<feature type="helix" evidence="10">
    <location>
        <begin position="73"/>
        <end position="89"/>
    </location>
</feature>
<feature type="strand" evidence="10">
    <location>
        <begin position="96"/>
        <end position="102"/>
    </location>
</feature>
<feature type="turn" evidence="10">
    <location>
        <begin position="103"/>
        <end position="105"/>
    </location>
</feature>
<feature type="helix" evidence="10">
    <location>
        <begin position="107"/>
        <end position="112"/>
    </location>
</feature>
<feature type="strand" evidence="10">
    <location>
        <begin position="120"/>
        <end position="125"/>
    </location>
</feature>
<feature type="helix" evidence="10">
    <location>
        <begin position="141"/>
        <end position="153"/>
    </location>
</feature>
<feature type="strand" evidence="10">
    <location>
        <begin position="156"/>
        <end position="161"/>
    </location>
</feature>
<feature type="helix" evidence="10">
    <location>
        <begin position="162"/>
        <end position="171"/>
    </location>
</feature>
<feature type="strand" evidence="10">
    <location>
        <begin position="172"/>
        <end position="181"/>
    </location>
</feature>
<feature type="helix" evidence="10">
    <location>
        <begin position="186"/>
        <end position="194"/>
    </location>
</feature>
<feature type="helix" evidence="10">
    <location>
        <begin position="195"/>
        <end position="197"/>
    </location>
</feature>
<feature type="strand" evidence="10">
    <location>
        <begin position="203"/>
        <end position="207"/>
    </location>
</feature>
<feature type="strand" evidence="10">
    <location>
        <begin position="219"/>
        <end position="226"/>
    </location>
</feature>
<feature type="strand" evidence="10">
    <location>
        <begin position="229"/>
        <end position="235"/>
    </location>
</feature>
<feature type="turn" evidence="10">
    <location>
        <begin position="239"/>
        <end position="241"/>
    </location>
</feature>
<feature type="helix" evidence="10">
    <location>
        <begin position="242"/>
        <end position="251"/>
    </location>
</feature>
<feature type="strand" evidence="9">
    <location>
        <begin position="258"/>
        <end position="260"/>
    </location>
</feature>
<feature type="helix" evidence="10">
    <location>
        <begin position="263"/>
        <end position="265"/>
    </location>
</feature>
<feature type="helix" evidence="9">
    <location>
        <begin position="267"/>
        <end position="270"/>
    </location>
</feature>
<feature type="strand" evidence="9">
    <location>
        <begin position="275"/>
        <end position="282"/>
    </location>
</feature>
<feature type="helix" evidence="9">
    <location>
        <begin position="289"/>
        <end position="300"/>
    </location>
</feature>
<feature type="helix" evidence="9">
    <location>
        <begin position="301"/>
        <end position="303"/>
    </location>
</feature>
<feature type="turn" evidence="9">
    <location>
        <begin position="304"/>
        <end position="306"/>
    </location>
</feature>
<feature type="strand" evidence="9">
    <location>
        <begin position="308"/>
        <end position="313"/>
    </location>
</feature>
<feature type="helix" evidence="9">
    <location>
        <begin position="317"/>
        <end position="319"/>
    </location>
</feature>
<feature type="helix" evidence="9">
    <location>
        <begin position="320"/>
        <end position="325"/>
    </location>
</feature>
<feature type="helix" evidence="10">
    <location>
        <begin position="330"/>
        <end position="332"/>
    </location>
</feature>
<feature type="strand" evidence="9">
    <location>
        <begin position="334"/>
        <end position="340"/>
    </location>
</feature>
<feature type="turn" evidence="9">
    <location>
        <begin position="341"/>
        <end position="343"/>
    </location>
</feature>
<feature type="strand" evidence="9">
    <location>
        <begin position="346"/>
        <end position="348"/>
    </location>
</feature>
<feature type="helix" evidence="9">
    <location>
        <begin position="356"/>
        <end position="367"/>
    </location>
</feature>
<feature type="helix" evidence="9">
    <location>
        <begin position="370"/>
        <end position="374"/>
    </location>
</feature>
<feature type="helix" evidence="10">
    <location>
        <begin position="383"/>
        <end position="385"/>
    </location>
</feature>
<feature type="strand" evidence="10">
    <location>
        <begin position="388"/>
        <end position="392"/>
    </location>
</feature>
<feature type="helix" evidence="10">
    <location>
        <begin position="394"/>
        <end position="401"/>
    </location>
</feature>
<feature type="strand" evidence="10">
    <location>
        <begin position="407"/>
        <end position="413"/>
    </location>
</feature>
<feature type="helix" evidence="10">
    <location>
        <begin position="418"/>
        <end position="421"/>
    </location>
</feature>
<feature type="helix" evidence="10">
    <location>
        <begin position="424"/>
        <end position="433"/>
    </location>
</feature>
<feature type="turn" evidence="10">
    <location>
        <begin position="434"/>
        <end position="436"/>
    </location>
</feature>
<feature type="strand" evidence="10">
    <location>
        <begin position="438"/>
        <end position="450"/>
    </location>
</feature>
<feature type="helix" evidence="10">
    <location>
        <begin position="454"/>
        <end position="456"/>
    </location>
</feature>
<feature type="strand" evidence="10">
    <location>
        <begin position="459"/>
        <end position="466"/>
    </location>
</feature>
<feature type="turn" evidence="10">
    <location>
        <begin position="468"/>
        <end position="470"/>
    </location>
</feature>
<feature type="helix" evidence="10">
    <location>
        <begin position="482"/>
        <end position="493"/>
    </location>
</feature>
<organism>
    <name type="scientific">Homo sapiens</name>
    <name type="common">Human</name>
    <dbReference type="NCBI Taxonomy" id="9606"/>
    <lineage>
        <taxon>Eukaryota</taxon>
        <taxon>Metazoa</taxon>
        <taxon>Chordata</taxon>
        <taxon>Craniata</taxon>
        <taxon>Vertebrata</taxon>
        <taxon>Euteleostomi</taxon>
        <taxon>Mammalia</taxon>
        <taxon>Eutheria</taxon>
        <taxon>Euarchontoglires</taxon>
        <taxon>Primates</taxon>
        <taxon>Haplorrhini</taxon>
        <taxon>Catarrhini</taxon>
        <taxon>Hominidae</taxon>
        <taxon>Homo</taxon>
    </lineage>
</organism>
<name>PDILT_HUMAN</name>
<protein>
    <recommendedName>
        <fullName>Protein disulfide-isomerase-like protein of the testis</fullName>
    </recommendedName>
</protein>
<comment type="function">
    <text evidence="7">Probable redox-inactive chaperone involved in spermatogenesis.</text>
</comment>
<comment type="subunit">
    <text evidence="5 7">Homodimer. The homodimer is not disulfide-linked. Interacts with ERO1A and CLGN.</text>
</comment>
<comment type="subcellular location">
    <subcellularLocation>
        <location evidence="3 5">Endoplasmic reticulum</location>
    </subcellularLocation>
</comment>
<comment type="tissue specificity">
    <text evidence="5 7">Testis-specific.</text>
</comment>
<comment type="domain">
    <text>The thioredoxin domain lacks the conserved redox-active Cys at position 417 which is replaced by a Ser residue, suggesting that it lacks thioredoxin activity.</text>
</comment>
<comment type="PTM">
    <text evidence="5">N-glycosylated.</text>
</comment>
<comment type="similarity">
    <text evidence="8">Belongs to the protein disulfide isomerase family.</text>
</comment>